<feature type="chain" id="PRO_0000304795" description="GPN-loop GTPase 3">
    <location>
        <begin position="1"/>
        <end position="285"/>
    </location>
</feature>
<feature type="region of interest" description="Disordered" evidence="3">
    <location>
        <begin position="261"/>
        <end position="285"/>
    </location>
</feature>
<feature type="short sequence motif" description="Gly-Pro-Asn (GPN)-loop; involved in dimer interface" evidence="2">
    <location>
        <begin position="72"/>
        <end position="74"/>
    </location>
</feature>
<feature type="compositionally biased region" description="Acidic residues" evidence="3">
    <location>
        <begin position="265"/>
        <end position="277"/>
    </location>
</feature>
<feature type="binding site" evidence="2">
    <location>
        <begin position="13"/>
        <end position="18"/>
    </location>
    <ligand>
        <name>GTP</name>
        <dbReference type="ChEBI" id="CHEBI:37565"/>
    </ligand>
</feature>
<feature type="binding site" evidence="2">
    <location>
        <begin position="174"/>
        <end position="177"/>
    </location>
    <ligand>
        <name>GTP</name>
        <dbReference type="ChEBI" id="CHEBI:37565"/>
    </ligand>
</feature>
<feature type="site" description="Stabilizes the phosphate intermediate; shared with dimeric partner" evidence="2">
    <location>
        <position position="74"/>
    </location>
</feature>
<dbReference type="EMBL" id="CR760599">
    <property type="protein sequence ID" value="CAJ81316.1"/>
    <property type="molecule type" value="mRNA"/>
</dbReference>
<dbReference type="EMBL" id="BC121552">
    <property type="protein sequence ID" value="AAI21553.1"/>
    <property type="molecule type" value="mRNA"/>
</dbReference>
<dbReference type="RefSeq" id="NP_001017191.1">
    <property type="nucleotide sequence ID" value="NM_001017191.2"/>
</dbReference>
<dbReference type="SMR" id="Q28I42"/>
<dbReference type="FunCoup" id="Q28I42">
    <property type="interactions" value="1148"/>
</dbReference>
<dbReference type="STRING" id="8364.ENSXETP00000037481"/>
<dbReference type="PaxDb" id="8364-ENSXETP00000045249"/>
<dbReference type="DNASU" id="549945"/>
<dbReference type="GeneID" id="549945"/>
<dbReference type="KEGG" id="xtr:549945"/>
<dbReference type="AGR" id="Xenbase:XB-GENE-973716"/>
<dbReference type="CTD" id="51184"/>
<dbReference type="Xenbase" id="XB-GENE-973716">
    <property type="gene designation" value="gpn3"/>
</dbReference>
<dbReference type="eggNOG" id="KOG1534">
    <property type="taxonomic scope" value="Eukaryota"/>
</dbReference>
<dbReference type="HOGENOM" id="CLU_037460_0_0_1"/>
<dbReference type="InParanoid" id="Q28I42"/>
<dbReference type="OMA" id="LYTHMTV"/>
<dbReference type="OrthoDB" id="5839at2759"/>
<dbReference type="PhylomeDB" id="Q28I42"/>
<dbReference type="TreeFam" id="TF105810"/>
<dbReference type="Proteomes" id="UP000008143">
    <property type="component" value="Chromosome 1"/>
</dbReference>
<dbReference type="Bgee" id="ENSXETG00000020939">
    <property type="expression patterns" value="Expressed in egg cell and 13 other cell types or tissues"/>
</dbReference>
<dbReference type="ExpressionAtlas" id="Q28I42">
    <property type="expression patterns" value="differential"/>
</dbReference>
<dbReference type="GO" id="GO:0005525">
    <property type="term" value="F:GTP binding"/>
    <property type="evidence" value="ECO:0007669"/>
    <property type="project" value="UniProtKB-KW"/>
</dbReference>
<dbReference type="GO" id="GO:0016787">
    <property type="term" value="F:hydrolase activity"/>
    <property type="evidence" value="ECO:0007669"/>
    <property type="project" value="UniProtKB-KW"/>
</dbReference>
<dbReference type="CDD" id="cd17872">
    <property type="entry name" value="GPN3"/>
    <property type="match status" value="1"/>
</dbReference>
<dbReference type="FunFam" id="3.40.50.300:FF:000616">
    <property type="entry name" value="GPN-loop GTPase 3"/>
    <property type="match status" value="1"/>
</dbReference>
<dbReference type="Gene3D" id="3.40.50.300">
    <property type="entry name" value="P-loop containing nucleotide triphosphate hydrolases"/>
    <property type="match status" value="1"/>
</dbReference>
<dbReference type="InterPro" id="IPR004130">
    <property type="entry name" value="Gpn"/>
</dbReference>
<dbReference type="InterPro" id="IPR030228">
    <property type="entry name" value="Gpn3"/>
</dbReference>
<dbReference type="InterPro" id="IPR027417">
    <property type="entry name" value="P-loop_NTPase"/>
</dbReference>
<dbReference type="PANTHER" id="PTHR21231:SF7">
    <property type="entry name" value="GPN-LOOP GTPASE 3"/>
    <property type="match status" value="1"/>
</dbReference>
<dbReference type="PANTHER" id="PTHR21231">
    <property type="entry name" value="XPA-BINDING PROTEIN 1-RELATED"/>
    <property type="match status" value="1"/>
</dbReference>
<dbReference type="Pfam" id="PF03029">
    <property type="entry name" value="ATP_bind_1"/>
    <property type="match status" value="1"/>
</dbReference>
<dbReference type="SUPFAM" id="SSF52540">
    <property type="entry name" value="P-loop containing nucleoside triphosphate hydrolases"/>
    <property type="match status" value="1"/>
</dbReference>
<accession>Q28I42</accession>
<comment type="function">
    <text evidence="1">Small GTPase required for proper localization of RNA polymerase II (RNAPII). May act at an RNAP assembly step prior to nuclear import.</text>
</comment>
<comment type="subunit">
    <text evidence="1">Heterodimer with gpn1. Binds to RNA polymerase II (RNAPII).</text>
</comment>
<comment type="similarity">
    <text evidence="4">Belongs to the GPN-loop GTPase family.</text>
</comment>
<gene>
    <name evidence="1" type="primary">gpn3</name>
    <name evidence="1" type="synonym">atpbd1c</name>
    <name type="ORF">TEgg091j20.1</name>
</gene>
<reference key="1">
    <citation type="submission" date="2006-10" db="EMBL/GenBank/DDBJ databases">
        <authorList>
            <consortium name="Sanger Xenopus tropicalis EST/cDNA project"/>
        </authorList>
    </citation>
    <scope>NUCLEOTIDE SEQUENCE [LARGE SCALE MRNA]</scope>
    <source>
        <tissue>Egg</tissue>
    </source>
</reference>
<reference key="2">
    <citation type="submission" date="2006-08" db="EMBL/GenBank/DDBJ databases">
        <authorList>
            <consortium name="NIH - Xenopus Gene Collection (XGC) project"/>
        </authorList>
    </citation>
    <scope>NUCLEOTIDE SEQUENCE [LARGE SCALE MRNA]</scope>
    <source>
        <strain>N6</strain>
        <tissue>Oviduct</tissue>
    </source>
</reference>
<sequence>MPRYAQLVMGPAGSGKSTYCSTMVQHCGSLNRSVQVVNLDPAAEHFDYPVLADIRELIEVDDVMEDRSLRFGPNGGLVYCMEYFANNFDWLESCLGHTEDDYILFDCPGQIELYTHLPVMKYLVEQLQQWEFRVCGVFLVDSQFMVESFKFLSGVLAALSAMVSLEIPQCNIMTKMDLLGKKAKKEIEKFLDPDMYSMIEDTSNRFKSNKFKKLTEALCGLIDDYSMVRFLPFDRSDEECMNIVLQHIDFAIQYGEDLEFKEPKENEEDKSENFDEFFQDRADEP</sequence>
<name>GPN3_XENTR</name>
<keyword id="KW-0342">GTP-binding</keyword>
<keyword id="KW-0378">Hydrolase</keyword>
<keyword id="KW-0547">Nucleotide-binding</keyword>
<keyword id="KW-1185">Reference proteome</keyword>
<protein>
    <recommendedName>
        <fullName evidence="1">GPN-loop GTPase 3</fullName>
    </recommendedName>
    <alternativeName>
        <fullName evidence="1">ATP-binding domain 1 family member C</fullName>
    </alternativeName>
</protein>
<organism>
    <name type="scientific">Xenopus tropicalis</name>
    <name type="common">Western clawed frog</name>
    <name type="synonym">Silurana tropicalis</name>
    <dbReference type="NCBI Taxonomy" id="8364"/>
    <lineage>
        <taxon>Eukaryota</taxon>
        <taxon>Metazoa</taxon>
        <taxon>Chordata</taxon>
        <taxon>Craniata</taxon>
        <taxon>Vertebrata</taxon>
        <taxon>Euteleostomi</taxon>
        <taxon>Amphibia</taxon>
        <taxon>Batrachia</taxon>
        <taxon>Anura</taxon>
        <taxon>Pipoidea</taxon>
        <taxon>Pipidae</taxon>
        <taxon>Xenopodinae</taxon>
        <taxon>Xenopus</taxon>
        <taxon>Silurana</taxon>
    </lineage>
</organism>
<evidence type="ECO:0000250" key="1">
    <source>
        <dbReference type="UniProtKB" id="Q9UHW5"/>
    </source>
</evidence>
<evidence type="ECO:0000250" key="2">
    <source>
        <dbReference type="UniProtKB" id="Q9UYR9"/>
    </source>
</evidence>
<evidence type="ECO:0000256" key="3">
    <source>
        <dbReference type="SAM" id="MobiDB-lite"/>
    </source>
</evidence>
<evidence type="ECO:0000305" key="4"/>
<proteinExistence type="evidence at transcript level"/>